<name>AMN1_MOUSE</name>
<feature type="chain" id="PRO_0000451143" description="Protein AMN1 homolog">
    <location>
        <begin position="1"/>
        <end position="258"/>
    </location>
</feature>
<dbReference type="EMBL" id="AC128664">
    <property type="status" value="NOT_ANNOTATED_CDS"/>
    <property type="molecule type" value="Genomic_DNA"/>
</dbReference>
<dbReference type="EMBL" id="AC132412">
    <property type="status" value="NOT_ANNOTATED_CDS"/>
    <property type="molecule type" value="Genomic_DNA"/>
</dbReference>
<dbReference type="CCDS" id="CCDS51961.1"/>
<dbReference type="RefSeq" id="NP_001106895.1">
    <property type="nucleotide sequence ID" value="NM_001113424.1"/>
</dbReference>
<dbReference type="SMR" id="B8JKV0"/>
<dbReference type="FunCoup" id="B8JKV0">
    <property type="interactions" value="129"/>
</dbReference>
<dbReference type="STRING" id="10090.ENSMUSP00000107160"/>
<dbReference type="iPTMnet" id="B8JKV0"/>
<dbReference type="PhosphoSitePlus" id="B8JKV0"/>
<dbReference type="SwissPalm" id="B8JKV0"/>
<dbReference type="PaxDb" id="10090-ENSMUSP00000107160"/>
<dbReference type="ProteomicsDB" id="320382"/>
<dbReference type="Antibodypedia" id="24696">
    <property type="antibodies" value="140 antibodies from 24 providers"/>
</dbReference>
<dbReference type="Ensembl" id="ENSMUST00000111535.8">
    <property type="protein sequence ID" value="ENSMUSP00000107160.2"/>
    <property type="gene ID" value="ENSMUSG00000068250.14"/>
</dbReference>
<dbReference type="GeneID" id="232566"/>
<dbReference type="KEGG" id="mmu:232566"/>
<dbReference type="UCSC" id="uc012evz.1">
    <property type="organism name" value="mouse"/>
</dbReference>
<dbReference type="AGR" id="MGI:2442933"/>
<dbReference type="CTD" id="196394"/>
<dbReference type="MGI" id="MGI:2442933">
    <property type="gene designation" value="Amn1"/>
</dbReference>
<dbReference type="VEuPathDB" id="HostDB:ENSMUSG00000068250"/>
<dbReference type="eggNOG" id="KOG1947">
    <property type="taxonomic scope" value="Eukaryota"/>
</dbReference>
<dbReference type="GeneTree" id="ENSGT00730000111305"/>
<dbReference type="InParanoid" id="B8JKV0"/>
<dbReference type="OMA" id="MSWDGAG"/>
<dbReference type="OrthoDB" id="10257471at2759"/>
<dbReference type="PhylomeDB" id="B8JKV0"/>
<dbReference type="TreeFam" id="TF331575"/>
<dbReference type="BioGRID-ORCS" id="232566">
    <property type="hits" value="5 hits in 76 CRISPR screens"/>
</dbReference>
<dbReference type="ChiTaRS" id="Amn1">
    <property type="organism name" value="mouse"/>
</dbReference>
<dbReference type="PRO" id="PR:B8JKV0"/>
<dbReference type="Proteomes" id="UP000000589">
    <property type="component" value="Chromosome 6"/>
</dbReference>
<dbReference type="RNAct" id="B8JKV0">
    <property type="molecule type" value="protein"/>
</dbReference>
<dbReference type="Bgee" id="ENSMUSG00000068250">
    <property type="expression patterns" value="Expressed in spermatocyte and 228 other cell types or tissues"/>
</dbReference>
<dbReference type="ExpressionAtlas" id="B8JKV0">
    <property type="expression patterns" value="baseline and differential"/>
</dbReference>
<dbReference type="GO" id="GO:0031528">
    <property type="term" value="C:microvillus membrane"/>
    <property type="evidence" value="ECO:0000314"/>
    <property type="project" value="MGI"/>
</dbReference>
<dbReference type="GO" id="GO:0038024">
    <property type="term" value="F:cargo receptor activity"/>
    <property type="evidence" value="ECO:0000266"/>
    <property type="project" value="MGI"/>
</dbReference>
<dbReference type="GO" id="GO:0015889">
    <property type="term" value="P:cobalamin transport"/>
    <property type="evidence" value="ECO:0000266"/>
    <property type="project" value="MGI"/>
</dbReference>
<dbReference type="FunFam" id="3.80.10.10:FF:000178">
    <property type="entry name" value="protein AMN1 homolog isoform X1"/>
    <property type="match status" value="1"/>
</dbReference>
<dbReference type="Gene3D" id="3.80.10.10">
    <property type="entry name" value="Ribonuclease Inhibitor"/>
    <property type="match status" value="1"/>
</dbReference>
<dbReference type="InterPro" id="IPR001611">
    <property type="entry name" value="Leu-rich_rpt"/>
</dbReference>
<dbReference type="InterPro" id="IPR006553">
    <property type="entry name" value="Leu-rich_rpt_Cys-con_subtyp"/>
</dbReference>
<dbReference type="InterPro" id="IPR032675">
    <property type="entry name" value="LRR_dom_sf"/>
</dbReference>
<dbReference type="PANTHER" id="PTHR13318">
    <property type="entry name" value="PARTNER OF PAIRED, ISOFORM B-RELATED"/>
    <property type="match status" value="1"/>
</dbReference>
<dbReference type="PANTHER" id="PTHR13318:SF254">
    <property type="entry name" value="PROTEIN AMN1 HOMOLOG"/>
    <property type="match status" value="1"/>
</dbReference>
<dbReference type="Pfam" id="PF13516">
    <property type="entry name" value="LRR_6"/>
    <property type="match status" value="3"/>
</dbReference>
<dbReference type="SMART" id="SM00367">
    <property type="entry name" value="LRR_CC"/>
    <property type="match status" value="6"/>
</dbReference>
<dbReference type="SUPFAM" id="SSF52047">
    <property type="entry name" value="RNI-like"/>
    <property type="match status" value="1"/>
</dbReference>
<comment type="subunit">
    <text evidence="1">Interacts with TASOR.</text>
</comment>
<comment type="tissue specificity">
    <text evidence="1">Expressed in the Sertoli cells of the testis.</text>
</comment>
<comment type="similarity">
    <text evidence="2">Belongs to the AMN1 family.</text>
</comment>
<organism>
    <name type="scientific">Mus musculus</name>
    <name type="common">Mouse</name>
    <dbReference type="NCBI Taxonomy" id="10090"/>
    <lineage>
        <taxon>Eukaryota</taxon>
        <taxon>Metazoa</taxon>
        <taxon>Chordata</taxon>
        <taxon>Craniata</taxon>
        <taxon>Vertebrata</taxon>
        <taxon>Euteleostomi</taxon>
        <taxon>Mammalia</taxon>
        <taxon>Eutheria</taxon>
        <taxon>Euarchontoglires</taxon>
        <taxon>Glires</taxon>
        <taxon>Rodentia</taxon>
        <taxon>Myomorpha</taxon>
        <taxon>Muroidea</taxon>
        <taxon>Muridae</taxon>
        <taxon>Murinae</taxon>
        <taxon>Mus</taxon>
        <taxon>Mus</taxon>
    </lineage>
</organism>
<accession>B8JKV0</accession>
<sequence length="258" mass="28466">MPLSGVVSQLLELCLQYLVINISRYISDIKYLPSNIKDRLIKIMSIRGRITDSNISEVLHPEVQRLDLRSCDISDVALQHLCKCRKLKALNLKSCREHRNSITSEGIKAVASSCSDLHEIYLKGCCSVTDEGVLALALNCHLLKIIDLGGCLGITDVSLHALGKNCPFLQCVDISTTQVSDNGVVALVSGPCAKQLEEINMRYCINLTDKAVEAALTACPRICILLFHGCPLITDRSQEVLEQLIGSRKLKQVTWSVY</sequence>
<evidence type="ECO:0000269" key="1">
    <source>
    </source>
</evidence>
<evidence type="ECO:0000305" key="2"/>
<protein>
    <recommendedName>
        <fullName>Protein AMN1 homolog</fullName>
    </recommendedName>
</protein>
<reference key="1">
    <citation type="journal article" date="2009" name="PLoS Biol.">
        <title>Lineage-specific biology revealed by a finished genome assembly of the mouse.</title>
        <authorList>
            <person name="Church D.M."/>
            <person name="Goodstadt L."/>
            <person name="Hillier L.W."/>
            <person name="Zody M.C."/>
            <person name="Goldstein S."/>
            <person name="She X."/>
            <person name="Bult C.J."/>
            <person name="Agarwala R."/>
            <person name="Cherry J.L."/>
            <person name="DiCuccio M."/>
            <person name="Hlavina W."/>
            <person name="Kapustin Y."/>
            <person name="Meric P."/>
            <person name="Maglott D."/>
            <person name="Birtle Z."/>
            <person name="Marques A.C."/>
            <person name="Graves T."/>
            <person name="Zhou S."/>
            <person name="Teague B."/>
            <person name="Potamousis K."/>
            <person name="Churas C."/>
            <person name="Place M."/>
            <person name="Herschleb J."/>
            <person name="Runnheim R."/>
            <person name="Forrest D."/>
            <person name="Amos-Landgraf J."/>
            <person name="Schwartz D.C."/>
            <person name="Cheng Z."/>
            <person name="Lindblad-Toh K."/>
            <person name="Eichler E.E."/>
            <person name="Ponting C.P."/>
        </authorList>
    </citation>
    <scope>NUCLEOTIDE SEQUENCE [LARGE SCALE GENOMIC DNA]</scope>
    <source>
        <strain>C57BL/6J</strain>
    </source>
</reference>
<reference key="2">
    <citation type="journal article" date="2010" name="Cell">
        <title>A tissue-specific atlas of mouse protein phosphorylation and expression.</title>
        <authorList>
            <person name="Huttlin E.L."/>
            <person name="Jedrychowski M.P."/>
            <person name="Elias J.E."/>
            <person name="Goswami T."/>
            <person name="Rad R."/>
            <person name="Beausoleil S.A."/>
            <person name="Villen J."/>
            <person name="Haas W."/>
            <person name="Sowa M.E."/>
            <person name="Gygi S.P."/>
        </authorList>
    </citation>
    <scope>IDENTIFICATION BY MASS SPECTROMETRY [LARGE SCALE ANALYSIS]</scope>
</reference>
<reference key="3">
    <citation type="journal article" date="2019" name="Exp. Cell Res.">
        <title>Fam208a orchestrates interaction protein network essential for early embryonic development and cell division.</title>
        <authorList>
            <person name="Gresakova V."/>
            <person name="Novosadova V."/>
            <person name="Prochazkova M."/>
            <person name="Bhargava S."/>
            <person name="Jenickova I."/>
            <person name="Prochazka J."/>
            <person name="Sedlacek R."/>
        </authorList>
    </citation>
    <scope>INTERACTION WITH TASOR</scope>
    <scope>TISSUE SPECIFICITY</scope>
</reference>
<keyword id="KW-1185">Reference proteome</keyword>
<proteinExistence type="evidence at protein level"/>
<gene>
    <name type="primary">Amn1</name>
</gene>